<comment type="function">
    <text evidence="1">Plays a role in virus cell tropism, and may be required for efficient virus replication in macrophages.</text>
</comment>
<comment type="similarity">
    <text evidence="2">Belongs to the asfivirus MGF 100 family.</text>
</comment>
<sequence>MVRLFHNPIKCLFYRGSRKTREKKLRKSLKKLNFYHPPGDCCQIYRLLENVPGGTYFITENMTNELIMIVKDSVDKKIKSVKLNFYGSYIKIHQHYYINIYMYLMRYTQIYKYPLICFNKYSYCNS</sequence>
<protein>
    <recommendedName>
        <fullName>Protein MGF 100-1R</fullName>
    </recommendedName>
</protein>
<gene>
    <name type="ordered locus">Mal-015</name>
</gene>
<accession>P0C9F1</accession>
<reference key="1">
    <citation type="submission" date="2003-03" db="EMBL/GenBank/DDBJ databases">
        <title>African swine fever virus genomes.</title>
        <authorList>
            <person name="Kutish G.F."/>
            <person name="Rock D.L."/>
        </authorList>
    </citation>
    <scope>NUCLEOTIDE SEQUENCE [LARGE SCALE GENOMIC DNA]</scope>
</reference>
<organismHost>
    <name type="scientific">Ornithodoros</name>
    <name type="common">relapsing fever ticks</name>
    <dbReference type="NCBI Taxonomy" id="6937"/>
</organismHost>
<organismHost>
    <name type="scientific">Phacochoerus aethiopicus</name>
    <name type="common">Warthog</name>
    <dbReference type="NCBI Taxonomy" id="85517"/>
</organismHost>
<organismHost>
    <name type="scientific">Phacochoerus africanus</name>
    <name type="common">Warthog</name>
    <dbReference type="NCBI Taxonomy" id="41426"/>
</organismHost>
<organismHost>
    <name type="scientific">Potamochoerus larvatus</name>
    <name type="common">Bushpig</name>
    <dbReference type="NCBI Taxonomy" id="273792"/>
</organismHost>
<organismHost>
    <name type="scientific">Sus scrofa</name>
    <name type="common">Pig</name>
    <dbReference type="NCBI Taxonomy" id="9823"/>
</organismHost>
<proteinExistence type="inferred from homology"/>
<evidence type="ECO:0000250" key="1"/>
<evidence type="ECO:0000305" key="2"/>
<feature type="chain" id="PRO_0000373171" description="Protein MGF 100-1R">
    <location>
        <begin position="1"/>
        <end position="126"/>
    </location>
</feature>
<dbReference type="EMBL" id="AY261361">
    <property type="status" value="NOT_ANNOTATED_CDS"/>
    <property type="molecule type" value="Genomic_DNA"/>
</dbReference>
<dbReference type="SMR" id="P0C9F1"/>
<dbReference type="Proteomes" id="UP000000860">
    <property type="component" value="Segment"/>
</dbReference>
<organism>
    <name type="scientific">African swine fever virus (isolate Tick/Malawi/Lil 20-1/1983)</name>
    <name type="common">ASFV</name>
    <dbReference type="NCBI Taxonomy" id="10500"/>
    <lineage>
        <taxon>Viruses</taxon>
        <taxon>Varidnaviria</taxon>
        <taxon>Bamfordvirae</taxon>
        <taxon>Nucleocytoviricota</taxon>
        <taxon>Pokkesviricetes</taxon>
        <taxon>Asfuvirales</taxon>
        <taxon>Asfarviridae</taxon>
        <taxon>Asfivirus</taxon>
        <taxon>African swine fever virus</taxon>
    </lineage>
</organism>
<name>1001R_ASFM2</name>